<name>ADT_PARKE</name>
<comment type="function">
    <text evidence="1 7">ADP:ATP antiporter that mediates import of ADP into the mitochondrial matrix for ATP synthesis, and export of ATP out to fuel the cell (PubMed:1748677). Cycles between the cytoplasmic-open state (c-state) and the matrix-open state (m-state): operates by the alternating access mechanism with a single substrate-binding site intermittently exposed to either the cytosolic (c-state) or matrix (m-state) side of the inner mitochondrial membrane (By similarity).</text>
</comment>
<comment type="catalytic activity">
    <reaction evidence="5">
        <text>ADP(in) + ATP(out) = ADP(out) + ATP(in)</text>
        <dbReference type="Rhea" id="RHEA:34999"/>
        <dbReference type="ChEBI" id="CHEBI:30616"/>
        <dbReference type="ChEBI" id="CHEBI:456216"/>
    </reaction>
    <physiologicalReaction direction="left-to-right" evidence="5">
        <dbReference type="Rhea" id="RHEA:35000"/>
    </physiologicalReaction>
</comment>
<comment type="activity regulation">
    <text evidence="1">The matrix-open state (m-state) is inhibited by the membrane-permeable bongkrekic acid (BKA). The cytoplasmic-open state (c-state) is inhibited by the membrane-impermeable toxic inhibitor carboxyatractyloside (CATR).</text>
</comment>
<comment type="subunit">
    <text evidence="1 2">Monomer.</text>
</comment>
<comment type="subcellular location">
    <subcellularLocation>
        <location evidence="4">Mitochondrion inner membrane</location>
        <topology evidence="6">Multi-pass membrane protein</topology>
    </subcellularLocation>
</comment>
<comment type="domain">
    <text evidence="2">The transmembrane helices are not perpendicular to the plane of the membrane, but cross the membrane at an angle. Odd-numbered transmembrane helices exhibit a sharp kink, due to the presence of a conserved proline residue.</text>
</comment>
<comment type="similarity">
    <text evidence="8">Belongs to the mitochondrial carrier (TC 2.A.29) family.</text>
</comment>
<keyword id="KW-0050">Antiport</keyword>
<keyword id="KW-0472">Membrane</keyword>
<keyword id="KW-0496">Mitochondrion</keyword>
<keyword id="KW-0999">Mitochondrion inner membrane</keyword>
<keyword id="KW-0677">Repeat</keyword>
<keyword id="KW-0812">Transmembrane</keyword>
<keyword id="KW-1133">Transmembrane helix</keyword>
<keyword id="KW-0813">Transport</keyword>
<accession>P31692</accession>
<feature type="chain" id="PRO_0000090589" description="ADP,ATP carrier protein">
    <location>
        <begin position="1"/>
        <end position="339"/>
    </location>
</feature>
<feature type="transmembrane region" description="Helical; Name=1" evidence="2">
    <location>
        <begin position="41"/>
        <end position="70"/>
    </location>
</feature>
<feature type="transmembrane region" description="Helical; Name=2" evidence="2">
    <location>
        <begin position="110"/>
        <end position="134"/>
    </location>
</feature>
<feature type="transmembrane region" description="Helical; Name=3" evidence="2">
    <location>
        <begin position="144"/>
        <end position="164"/>
    </location>
</feature>
<feature type="transmembrane region" description="Helical; Name=4" evidence="2">
    <location>
        <begin position="212"/>
        <end position="232"/>
    </location>
</feature>
<feature type="transmembrane region" description="Helical; Name=5" evidence="2">
    <location>
        <begin position="245"/>
        <end position="265"/>
    </location>
</feature>
<feature type="transmembrane region" description="Helical; Name=6" evidence="2">
    <location>
        <begin position="305"/>
        <end position="322"/>
    </location>
</feature>
<feature type="repeat" description="Solcar 1">
    <location>
        <begin position="39"/>
        <end position="133"/>
    </location>
</feature>
<feature type="repeat" description="Solcar 2">
    <location>
        <begin position="145"/>
        <end position="234"/>
    </location>
</feature>
<feature type="repeat" description="Solcar 3">
    <location>
        <begin position="246"/>
        <end position="328"/>
    </location>
</feature>
<feature type="region of interest" description="Important for transport activity" evidence="3">
    <location>
        <begin position="269"/>
        <end position="274"/>
    </location>
</feature>
<feature type="short sequence motif" description="Nucleotide carrier signature motif" evidence="2">
    <location>
        <begin position="269"/>
        <end position="274"/>
    </location>
</feature>
<feature type="binding site" evidence="2">
    <location>
        <position position="115"/>
    </location>
    <ligand>
        <name>ADP</name>
        <dbReference type="ChEBI" id="CHEBI:456216"/>
    </ligand>
</feature>
<feature type="binding site" evidence="2">
    <location>
        <position position="127"/>
    </location>
    <ligand>
        <name>ADP</name>
        <dbReference type="ChEBI" id="CHEBI:456216"/>
    </ligand>
</feature>
<feature type="binding site" evidence="2">
    <location>
        <position position="269"/>
    </location>
    <ligand>
        <name>ADP</name>
        <dbReference type="ChEBI" id="CHEBI:456216"/>
    </ligand>
</feature>
<reference key="1">
    <citation type="journal article" date="1991" name="J. Biol. Chem.">
        <title>Glucose increases the expression of the ATP/ADP translocator and the glyceraldehyde-3-phosphate dehydrogenase genes in Chlorella.</title>
        <authorList>
            <person name="Hilgarth C."/>
            <person name="Sauer N."/>
            <person name="Tanner W."/>
        </authorList>
    </citation>
    <scope>NUCLEOTIDE SEQUENCE [GENOMIC DNA]</scope>
    <scope>FUNCTION</scope>
</reference>
<sequence length="339" mass="36686">MLSSALYQQAGLSGLLRASAMGPQTPFIASPKETQADPMAFVKDLLAGGTAGAISKTAVAPIERVKLLLQTQDSNPMIKSGQVPRYTGIVNCFVRVSSEQGVASFWRGNLANVVRYFPTQAFNFAFKDTIKGLFPKYSPKTDFWRFFVVNLASGGLAGAGSLLIVYPLDFARTRLAADVGSGKSREFTGLVDCLSKVVKRGGPMALYQGFGVSVQGIIVYRGAYFGLYDTAKGVLFKDERTANFFAKWAVAQAVTAGAGVLSYPFDTVRRRLMMQSGGERQYNGTIDCWRKVAQQEGMKAFFKGAWSNVLRGAGGAFVLVLYDEIKKFINPNAVSSASE</sequence>
<proteinExistence type="inferred from homology"/>
<dbReference type="EMBL" id="M76669">
    <property type="protein sequence ID" value="AAA33027.1"/>
    <property type="molecule type" value="Genomic_DNA"/>
</dbReference>
<dbReference type="PIR" id="A41677">
    <property type="entry name" value="A41677"/>
</dbReference>
<dbReference type="SMR" id="P31692"/>
<dbReference type="GO" id="GO:0005743">
    <property type="term" value="C:mitochondrial inner membrane"/>
    <property type="evidence" value="ECO:0007669"/>
    <property type="project" value="UniProtKB-SubCell"/>
</dbReference>
<dbReference type="GO" id="GO:0005471">
    <property type="term" value="F:ATP:ADP antiporter activity"/>
    <property type="evidence" value="ECO:0007669"/>
    <property type="project" value="InterPro"/>
</dbReference>
<dbReference type="GO" id="GO:0140021">
    <property type="term" value="P:mitochondrial ADP transmembrane transport"/>
    <property type="evidence" value="ECO:0007669"/>
    <property type="project" value="InterPro"/>
</dbReference>
<dbReference type="GO" id="GO:1990544">
    <property type="term" value="P:mitochondrial ATP transmembrane transport"/>
    <property type="evidence" value="ECO:0007669"/>
    <property type="project" value="InterPro"/>
</dbReference>
<dbReference type="FunFam" id="1.50.40.10:FF:000061">
    <property type="entry name" value="ADP/ATP transporter on adenylate translocase"/>
    <property type="match status" value="1"/>
</dbReference>
<dbReference type="Gene3D" id="1.50.40.10">
    <property type="entry name" value="Mitochondrial carrier domain"/>
    <property type="match status" value="1"/>
</dbReference>
<dbReference type="InterPro" id="IPR002113">
    <property type="entry name" value="ADT_euk_type"/>
</dbReference>
<dbReference type="InterPro" id="IPR002067">
    <property type="entry name" value="Mit_carrier"/>
</dbReference>
<dbReference type="InterPro" id="IPR018108">
    <property type="entry name" value="Mitochondrial_sb/sol_carrier"/>
</dbReference>
<dbReference type="InterPro" id="IPR023395">
    <property type="entry name" value="Mt_carrier_dom_sf"/>
</dbReference>
<dbReference type="PANTHER" id="PTHR45635">
    <property type="entry name" value="ADP,ATP CARRIER PROTEIN 1-RELATED-RELATED"/>
    <property type="match status" value="1"/>
</dbReference>
<dbReference type="PANTHER" id="PTHR45635:SF14">
    <property type="entry name" value="ADP_ATP TRANSLOCASE"/>
    <property type="match status" value="1"/>
</dbReference>
<dbReference type="Pfam" id="PF00153">
    <property type="entry name" value="Mito_carr"/>
    <property type="match status" value="3"/>
</dbReference>
<dbReference type="PRINTS" id="PR00927">
    <property type="entry name" value="ADPTRNSLCASE"/>
</dbReference>
<dbReference type="PRINTS" id="PR00926">
    <property type="entry name" value="MITOCARRIER"/>
</dbReference>
<dbReference type="SUPFAM" id="SSF103506">
    <property type="entry name" value="Mitochondrial carrier"/>
    <property type="match status" value="1"/>
</dbReference>
<dbReference type="PROSITE" id="PS50920">
    <property type="entry name" value="SOLCAR"/>
    <property type="match status" value="3"/>
</dbReference>
<protein>
    <recommendedName>
        <fullName>ADP,ATP carrier protein</fullName>
    </recommendedName>
    <alternativeName>
        <fullName>ADP/ATP translocase</fullName>
    </alternativeName>
    <alternativeName>
        <fullName>Adenine nucleotide translocator</fullName>
        <shortName>ANT</shortName>
    </alternativeName>
</protein>
<evidence type="ECO:0000250" key="1">
    <source>
        <dbReference type="UniProtKB" id="G2QNH0"/>
    </source>
</evidence>
<evidence type="ECO:0000250" key="2">
    <source>
        <dbReference type="UniProtKB" id="P02722"/>
    </source>
</evidence>
<evidence type="ECO:0000250" key="3">
    <source>
        <dbReference type="UniProtKB" id="P12235"/>
    </source>
</evidence>
<evidence type="ECO:0000250" key="4">
    <source>
        <dbReference type="UniProtKB" id="P31167"/>
    </source>
</evidence>
<evidence type="ECO:0000250" key="5">
    <source>
        <dbReference type="UniProtKB" id="P48962"/>
    </source>
</evidence>
<evidence type="ECO:0000255" key="6"/>
<evidence type="ECO:0000269" key="7">
    <source>
    </source>
</evidence>
<evidence type="ECO:0000305" key="8"/>
<organism>
    <name type="scientific">Parachlorella kessleri</name>
    <name type="common">Green alga</name>
    <name type="synonym">Chlorella kessleri</name>
    <dbReference type="NCBI Taxonomy" id="3074"/>
    <lineage>
        <taxon>Eukaryota</taxon>
        <taxon>Viridiplantae</taxon>
        <taxon>Chlorophyta</taxon>
        <taxon>core chlorophytes</taxon>
        <taxon>Trebouxiophyceae</taxon>
        <taxon>Chlorellales</taxon>
        <taxon>Chlorellaceae</taxon>
        <taxon>Parachlorella</taxon>
    </lineage>
</organism>